<keyword id="KW-0997">Cell inner membrane</keyword>
<keyword id="KW-1003">Cell membrane</keyword>
<keyword id="KW-0472">Membrane</keyword>
<keyword id="KW-0511">Multifunctional enzyme</keyword>
<keyword id="KW-0520">NAD</keyword>
<keyword id="KW-0874">Quinone</keyword>
<keyword id="KW-1278">Translocase</keyword>
<keyword id="KW-0813">Transport</keyword>
<keyword id="KW-0830">Ubiquinone</keyword>
<reference key="1">
    <citation type="journal article" date="2009" name="J. Bacteriol.">
        <title>Complete and draft genome sequences of six members of the Aquificales.</title>
        <authorList>
            <person name="Reysenbach A.-L."/>
            <person name="Hamamura N."/>
            <person name="Podar M."/>
            <person name="Griffiths E."/>
            <person name="Ferreira S."/>
            <person name="Hochstein R."/>
            <person name="Heidelberg J."/>
            <person name="Johnson J."/>
            <person name="Mead D."/>
            <person name="Pohorille A."/>
            <person name="Sarmiento M."/>
            <person name="Schweighofer K."/>
            <person name="Seshadri R."/>
            <person name="Voytek M.A."/>
        </authorList>
    </citation>
    <scope>NUCLEOTIDE SEQUENCE [LARGE SCALE GENOMIC DNA]</scope>
    <source>
        <strain>Y04AAS1</strain>
    </source>
</reference>
<accession>B4U8I3</accession>
<name>NUOCD_HYDS0</name>
<feature type="chain" id="PRO_0000358647" description="NADH-quinone oxidoreductase subunit C/D">
    <location>
        <begin position="1"/>
        <end position="571"/>
    </location>
</feature>
<feature type="region of interest" description="NADH dehydrogenase I subunit C" evidence="1">
    <location>
        <begin position="1"/>
        <end position="171"/>
    </location>
</feature>
<feature type="region of interest" description="NADH dehydrogenase I subunit D" evidence="1">
    <location>
        <begin position="194"/>
        <end position="571"/>
    </location>
</feature>
<comment type="function">
    <text evidence="1">NDH-1 shuttles electrons from NADH, via FMN and iron-sulfur (Fe-S) centers, to quinones in the respiratory chain. The immediate electron acceptor for the enzyme in this species is believed to be ubiquinone. Couples the redox reaction to proton translocation (for every two electrons transferred, four hydrogen ions are translocated across the cytoplasmic membrane), and thus conserves the redox energy in a proton gradient.</text>
</comment>
<comment type="catalytic activity">
    <reaction>
        <text>a quinone + NADH + 5 H(+)(in) = a quinol + NAD(+) + 4 H(+)(out)</text>
        <dbReference type="Rhea" id="RHEA:57888"/>
        <dbReference type="ChEBI" id="CHEBI:15378"/>
        <dbReference type="ChEBI" id="CHEBI:24646"/>
        <dbReference type="ChEBI" id="CHEBI:57540"/>
        <dbReference type="ChEBI" id="CHEBI:57945"/>
        <dbReference type="ChEBI" id="CHEBI:132124"/>
    </reaction>
</comment>
<comment type="subunit">
    <text evidence="1">NDH-1 is composed of 13 different subunits. Subunits NuoB, CD, E, F, and G constitute the peripheral sector of the complex (By similarity).</text>
</comment>
<comment type="subcellular location">
    <subcellularLocation>
        <location evidence="1">Cell inner membrane</location>
        <topology evidence="1">Peripheral membrane protein</topology>
        <orientation evidence="1">Cytoplasmic side</orientation>
    </subcellularLocation>
</comment>
<comment type="similarity">
    <text evidence="2">In the N-terminal section; belongs to the complex I 30 kDa subunit family.</text>
</comment>
<comment type="similarity">
    <text evidence="2">In the C-terminal section; belongs to the complex I 49 kDa subunit family.</text>
</comment>
<dbReference type="EC" id="7.1.1.-"/>
<dbReference type="EMBL" id="CP001130">
    <property type="protein sequence ID" value="ACG57444.1"/>
    <property type="molecule type" value="Genomic_DNA"/>
</dbReference>
<dbReference type="RefSeq" id="WP_012513800.1">
    <property type="nucleotide sequence ID" value="NC_011126.1"/>
</dbReference>
<dbReference type="SMR" id="B4U8I3"/>
<dbReference type="STRING" id="380749.HY04AAS1_0757"/>
<dbReference type="KEGG" id="hya:HY04AAS1_0757"/>
<dbReference type="eggNOG" id="COG0649">
    <property type="taxonomic scope" value="Bacteria"/>
</dbReference>
<dbReference type="eggNOG" id="COG0852">
    <property type="taxonomic scope" value="Bacteria"/>
</dbReference>
<dbReference type="HOGENOM" id="CLU_015134_3_2_0"/>
<dbReference type="OrthoDB" id="9801496at2"/>
<dbReference type="GO" id="GO:0030964">
    <property type="term" value="C:NADH dehydrogenase complex"/>
    <property type="evidence" value="ECO:0007669"/>
    <property type="project" value="InterPro"/>
</dbReference>
<dbReference type="GO" id="GO:0005886">
    <property type="term" value="C:plasma membrane"/>
    <property type="evidence" value="ECO:0007669"/>
    <property type="project" value="UniProtKB-SubCell"/>
</dbReference>
<dbReference type="GO" id="GO:0051287">
    <property type="term" value="F:NAD binding"/>
    <property type="evidence" value="ECO:0007669"/>
    <property type="project" value="InterPro"/>
</dbReference>
<dbReference type="GO" id="GO:0008137">
    <property type="term" value="F:NADH dehydrogenase (ubiquinone) activity"/>
    <property type="evidence" value="ECO:0007669"/>
    <property type="project" value="InterPro"/>
</dbReference>
<dbReference type="GO" id="GO:0050136">
    <property type="term" value="F:NADH:ubiquinone reductase (non-electrogenic) activity"/>
    <property type="evidence" value="ECO:0007669"/>
    <property type="project" value="UniProtKB-UniRule"/>
</dbReference>
<dbReference type="GO" id="GO:0048038">
    <property type="term" value="F:quinone binding"/>
    <property type="evidence" value="ECO:0007669"/>
    <property type="project" value="UniProtKB-KW"/>
</dbReference>
<dbReference type="Gene3D" id="1.10.645.10">
    <property type="entry name" value="Cytochrome-c3 Hydrogenase, chain B"/>
    <property type="match status" value="1"/>
</dbReference>
<dbReference type="Gene3D" id="3.30.460.80">
    <property type="entry name" value="NADH:ubiquinone oxidoreductase, 30kDa subunit"/>
    <property type="match status" value="1"/>
</dbReference>
<dbReference type="HAMAP" id="MF_01397">
    <property type="entry name" value="NDH1_NuoCD_2"/>
    <property type="match status" value="1"/>
</dbReference>
<dbReference type="HAMAP" id="MF_01358">
    <property type="entry name" value="NDH1_NuoD"/>
    <property type="match status" value="1"/>
</dbReference>
<dbReference type="InterPro" id="IPR001135">
    <property type="entry name" value="NADH_Q_OxRdtase_suD"/>
</dbReference>
<dbReference type="InterPro" id="IPR037232">
    <property type="entry name" value="NADH_quin_OxRdtase_su_C/D-like"/>
</dbReference>
<dbReference type="InterPro" id="IPR001268">
    <property type="entry name" value="NADH_UbQ_OxRdtase_30kDa_su"/>
</dbReference>
<dbReference type="InterPro" id="IPR026662">
    <property type="entry name" value="NDH-1_subunit_CD"/>
</dbReference>
<dbReference type="InterPro" id="IPR022885">
    <property type="entry name" value="NDH1_su_D/H"/>
</dbReference>
<dbReference type="InterPro" id="IPR029014">
    <property type="entry name" value="NiFe-Hase_large"/>
</dbReference>
<dbReference type="NCBIfam" id="NF004739">
    <property type="entry name" value="PRK06075.1"/>
    <property type="match status" value="1"/>
</dbReference>
<dbReference type="PANTHER" id="PTHR11993:SF10">
    <property type="entry name" value="NADH DEHYDROGENASE [UBIQUINONE] IRON-SULFUR PROTEIN 2, MITOCHONDRIAL"/>
    <property type="match status" value="1"/>
</dbReference>
<dbReference type="PANTHER" id="PTHR11993">
    <property type="entry name" value="NADH-UBIQUINONE OXIDOREDUCTASE 49 KDA SUBUNIT"/>
    <property type="match status" value="1"/>
</dbReference>
<dbReference type="Pfam" id="PF00329">
    <property type="entry name" value="Complex1_30kDa"/>
    <property type="match status" value="1"/>
</dbReference>
<dbReference type="Pfam" id="PF00346">
    <property type="entry name" value="Complex1_49kDa"/>
    <property type="match status" value="1"/>
</dbReference>
<dbReference type="SUPFAM" id="SSF56762">
    <property type="entry name" value="HydB/Nqo4-like"/>
    <property type="match status" value="1"/>
</dbReference>
<dbReference type="SUPFAM" id="SSF143243">
    <property type="entry name" value="Nqo5-like"/>
    <property type="match status" value="1"/>
</dbReference>
<gene>
    <name type="primary">nuoC</name>
    <name type="synonym">nuoCD</name>
    <name type="synonym">nuoD</name>
    <name type="ordered locus">HY04AAS1_0757</name>
</gene>
<evidence type="ECO:0000250" key="1"/>
<evidence type="ECO:0000305" key="2"/>
<protein>
    <recommendedName>
        <fullName>NADH-quinone oxidoreductase subunit C/D</fullName>
        <ecNumber>7.1.1.-</ecNumber>
    </recommendedName>
    <alternativeName>
        <fullName>NADH dehydrogenase I subunit C/D</fullName>
    </alternativeName>
    <alternativeName>
        <fullName>NDH-1 subunit C/D</fullName>
    </alternativeName>
</protein>
<proteinExistence type="inferred from homology"/>
<organism>
    <name type="scientific">Hydrogenobaculum sp. (strain Y04AAS1)</name>
    <dbReference type="NCBI Taxonomy" id="380749"/>
    <lineage>
        <taxon>Bacteria</taxon>
        <taxon>Pseudomonadati</taxon>
        <taxon>Aquificota</taxon>
        <taxon>Aquificia</taxon>
        <taxon>Aquificales</taxon>
        <taxon>Aquificaceae</taxon>
        <taxon>Hydrogenobaculum</taxon>
    </lineage>
</organism>
<sequence>MQASEKTLNEIKAKLPYVEVKKDKLLSIVYVQKELLINTLKAIKEDFGFKLFLDHSVVDTLEAQNRFEAFYILYNVDTKERIAVKTRTEHSLPSAEKLWFAAKWAERECYDMFGINYEGHEHLVRAFMWDTYNYHPLRKDFPLQGYETVELPSLNETVFGDNLSNTMNYRRTHTYVPTLKDLEYTEKNRIKKKAQVVLNWGPLHPGTHGTMWFLFDLEGERIVQTDVILGQLHRGVEKLAEHEPYQQFLVYTDRMDYISALCSNQAWTVAVERLLGIEDIVPIKAKYIRTMMSELQRINSHLLWLGTYALDLGALTIFLYAFKEREKIMDIIEGITGARLTISYTRIGGVRMDLPEGALEVIESFIKFFPKELKDWEKILSRNRIWVKRNKNVGVLTKEDIYFYGLTGAVARGSGVFYDIRKLEPYDAYGMVEFDVPLGENGDCYDRYLVRIEEMKQSIRIIEQCVQKLKTMSPNEPFMAESQDPKKLRLTLDGIGLKVPVGEIYSSGENPRGELGFYINSKGGLKPYRVKIRPGSFYNLCVYPHLMENRYVADAVTILASLDPVVGEVDR</sequence>